<dbReference type="EC" id="3.6.1.-" evidence="1"/>
<dbReference type="EMBL" id="CU928162">
    <property type="protein sequence ID" value="CAR09301.1"/>
    <property type="molecule type" value="Genomic_DNA"/>
</dbReference>
<dbReference type="RefSeq" id="WP_000564489.1">
    <property type="nucleotide sequence ID" value="NC_011745.1"/>
</dbReference>
<dbReference type="SMR" id="B7MYY4"/>
<dbReference type="GeneID" id="75203778"/>
<dbReference type="KEGG" id="ecq:ECED1_3286"/>
<dbReference type="HOGENOM" id="CLU_087195_3_2_6"/>
<dbReference type="Proteomes" id="UP000000748">
    <property type="component" value="Chromosome"/>
</dbReference>
<dbReference type="GO" id="GO:0005737">
    <property type="term" value="C:cytoplasm"/>
    <property type="evidence" value="ECO:0007669"/>
    <property type="project" value="TreeGrafter"/>
</dbReference>
<dbReference type="GO" id="GO:0034353">
    <property type="term" value="F:mRNA 5'-diphosphatase activity"/>
    <property type="evidence" value="ECO:0007669"/>
    <property type="project" value="TreeGrafter"/>
</dbReference>
<dbReference type="GO" id="GO:0006402">
    <property type="term" value="P:mRNA catabolic process"/>
    <property type="evidence" value="ECO:0007669"/>
    <property type="project" value="TreeGrafter"/>
</dbReference>
<dbReference type="CDD" id="cd03671">
    <property type="entry name" value="NUDIX_Ap4A_hydrolase_plant_like"/>
    <property type="match status" value="1"/>
</dbReference>
<dbReference type="FunFam" id="3.90.79.10:FF:000001">
    <property type="entry name" value="RNA pyrophosphohydrolase"/>
    <property type="match status" value="1"/>
</dbReference>
<dbReference type="Gene3D" id="3.90.79.10">
    <property type="entry name" value="Nucleoside Triphosphate Pyrophosphohydrolase"/>
    <property type="match status" value="1"/>
</dbReference>
<dbReference type="HAMAP" id="MF_00298">
    <property type="entry name" value="Nudix_RppH"/>
    <property type="match status" value="1"/>
</dbReference>
<dbReference type="InterPro" id="IPR020476">
    <property type="entry name" value="Nudix_hydrolase"/>
</dbReference>
<dbReference type="InterPro" id="IPR015797">
    <property type="entry name" value="NUDIX_hydrolase-like_dom_sf"/>
</dbReference>
<dbReference type="InterPro" id="IPR020084">
    <property type="entry name" value="NUDIX_hydrolase_CS"/>
</dbReference>
<dbReference type="InterPro" id="IPR000086">
    <property type="entry name" value="NUDIX_hydrolase_dom"/>
</dbReference>
<dbReference type="InterPro" id="IPR022927">
    <property type="entry name" value="RppH"/>
</dbReference>
<dbReference type="NCBIfam" id="NF001934">
    <property type="entry name" value="PRK00714.1-1"/>
    <property type="match status" value="1"/>
</dbReference>
<dbReference type="NCBIfam" id="NF001937">
    <property type="entry name" value="PRK00714.1-4"/>
    <property type="match status" value="1"/>
</dbReference>
<dbReference type="NCBIfam" id="NF001938">
    <property type="entry name" value="PRK00714.1-5"/>
    <property type="match status" value="1"/>
</dbReference>
<dbReference type="PANTHER" id="PTHR23114">
    <property type="entry name" value="M7GPPPN-MRNA HYDROLASE"/>
    <property type="match status" value="1"/>
</dbReference>
<dbReference type="PANTHER" id="PTHR23114:SF17">
    <property type="entry name" value="M7GPPPN-MRNA HYDROLASE"/>
    <property type="match status" value="1"/>
</dbReference>
<dbReference type="Pfam" id="PF00293">
    <property type="entry name" value="NUDIX"/>
    <property type="match status" value="1"/>
</dbReference>
<dbReference type="PRINTS" id="PR00502">
    <property type="entry name" value="NUDIXFAMILY"/>
</dbReference>
<dbReference type="SUPFAM" id="SSF55811">
    <property type="entry name" value="Nudix"/>
    <property type="match status" value="1"/>
</dbReference>
<dbReference type="PROSITE" id="PS51462">
    <property type="entry name" value="NUDIX"/>
    <property type="match status" value="1"/>
</dbReference>
<dbReference type="PROSITE" id="PS00893">
    <property type="entry name" value="NUDIX_BOX"/>
    <property type="match status" value="1"/>
</dbReference>
<protein>
    <recommendedName>
        <fullName evidence="1">RNA pyrophosphohydrolase</fullName>
        <ecNumber evidence="1">3.6.1.-</ecNumber>
    </recommendedName>
    <alternativeName>
        <fullName evidence="1">(Di)nucleoside polyphosphate hydrolase</fullName>
    </alternativeName>
</protein>
<feature type="chain" id="PRO_1000191844" description="RNA pyrophosphohydrolase">
    <location>
        <begin position="1"/>
        <end position="176"/>
    </location>
</feature>
<feature type="domain" description="Nudix hydrolase" evidence="1">
    <location>
        <begin position="6"/>
        <end position="149"/>
    </location>
</feature>
<feature type="short sequence motif" description="Nudix box">
    <location>
        <begin position="38"/>
        <end position="59"/>
    </location>
</feature>
<reference key="1">
    <citation type="journal article" date="2009" name="PLoS Genet.">
        <title>Organised genome dynamics in the Escherichia coli species results in highly diverse adaptive paths.</title>
        <authorList>
            <person name="Touchon M."/>
            <person name="Hoede C."/>
            <person name="Tenaillon O."/>
            <person name="Barbe V."/>
            <person name="Baeriswyl S."/>
            <person name="Bidet P."/>
            <person name="Bingen E."/>
            <person name="Bonacorsi S."/>
            <person name="Bouchier C."/>
            <person name="Bouvet O."/>
            <person name="Calteau A."/>
            <person name="Chiapello H."/>
            <person name="Clermont O."/>
            <person name="Cruveiller S."/>
            <person name="Danchin A."/>
            <person name="Diard M."/>
            <person name="Dossat C."/>
            <person name="Karoui M.E."/>
            <person name="Frapy E."/>
            <person name="Garry L."/>
            <person name="Ghigo J.M."/>
            <person name="Gilles A.M."/>
            <person name="Johnson J."/>
            <person name="Le Bouguenec C."/>
            <person name="Lescat M."/>
            <person name="Mangenot S."/>
            <person name="Martinez-Jehanne V."/>
            <person name="Matic I."/>
            <person name="Nassif X."/>
            <person name="Oztas S."/>
            <person name="Petit M.A."/>
            <person name="Pichon C."/>
            <person name="Rouy Z."/>
            <person name="Ruf C.S."/>
            <person name="Schneider D."/>
            <person name="Tourret J."/>
            <person name="Vacherie B."/>
            <person name="Vallenet D."/>
            <person name="Medigue C."/>
            <person name="Rocha E.P.C."/>
            <person name="Denamur E."/>
        </authorList>
    </citation>
    <scope>NUCLEOTIDE SEQUENCE [LARGE SCALE GENOMIC DNA]</scope>
    <source>
        <strain>ED1a</strain>
    </source>
</reference>
<evidence type="ECO:0000255" key="1">
    <source>
        <dbReference type="HAMAP-Rule" id="MF_00298"/>
    </source>
</evidence>
<organism>
    <name type="scientific">Escherichia coli O81 (strain ED1a)</name>
    <dbReference type="NCBI Taxonomy" id="585397"/>
    <lineage>
        <taxon>Bacteria</taxon>
        <taxon>Pseudomonadati</taxon>
        <taxon>Pseudomonadota</taxon>
        <taxon>Gammaproteobacteria</taxon>
        <taxon>Enterobacterales</taxon>
        <taxon>Enterobacteriaceae</taxon>
        <taxon>Escherichia</taxon>
    </lineage>
</organism>
<proteinExistence type="inferred from homology"/>
<keyword id="KW-0378">Hydrolase</keyword>
<sequence>MIDDDGYRPNVGIVICNRQGQVMWARRFGQHSWQFPQGGINPGESAEQAMYRELFEEVGLSRKDVRILASTRNWLRYKLPKRLVRWDTKPVCIGQKQKWFLLQLVSGDAEINMQTSSTPEFDGWRWVSYWYPVRQVVSFKRDVYRRVMKEFASVVMSLQENTPKPQNASAYRRKRG</sequence>
<accession>B7MYY4</accession>
<name>RPPH_ECO81</name>
<gene>
    <name evidence="1" type="primary">rppH</name>
    <name evidence="1" type="synonym">nudH</name>
    <name type="ordered locus">ECED1_3286</name>
</gene>
<comment type="function">
    <text evidence="1">Accelerates the degradation of transcripts by removing pyrophosphate from the 5'-end of triphosphorylated RNA, leading to a more labile monophosphorylated state that can stimulate subsequent ribonuclease cleavage.</text>
</comment>
<comment type="cofactor">
    <cofactor evidence="1">
        <name>a divalent metal cation</name>
        <dbReference type="ChEBI" id="CHEBI:60240"/>
    </cofactor>
</comment>
<comment type="similarity">
    <text evidence="1">Belongs to the Nudix hydrolase family. RppH subfamily.</text>
</comment>